<gene>
    <name type="primary">aaxB</name>
    <name type="ordered locus">TC_0652</name>
</gene>
<proteinExistence type="inferred from homology"/>
<dbReference type="EC" id="4.1.1.19"/>
<dbReference type="EMBL" id="AE002160">
    <property type="protein sequence ID" value="AAF39478.1"/>
    <property type="molecule type" value="Genomic_DNA"/>
</dbReference>
<dbReference type="PIR" id="B81680">
    <property type="entry name" value="B81680"/>
</dbReference>
<dbReference type="RefSeq" id="WP_010231121.1">
    <property type="nucleotide sequence ID" value="NZ_CP063055.1"/>
</dbReference>
<dbReference type="SMR" id="Q9PK21"/>
<dbReference type="GeneID" id="1246013"/>
<dbReference type="KEGG" id="cmu:TC_0652"/>
<dbReference type="eggNOG" id="COG1945">
    <property type="taxonomic scope" value="Bacteria"/>
</dbReference>
<dbReference type="HOGENOM" id="CLU_1313366_0_0_0"/>
<dbReference type="OrthoDB" id="9783061at2"/>
<dbReference type="Proteomes" id="UP000000800">
    <property type="component" value="Chromosome"/>
</dbReference>
<dbReference type="GO" id="GO:0005737">
    <property type="term" value="C:cytoplasm"/>
    <property type="evidence" value="ECO:0007669"/>
    <property type="project" value="UniProtKB-SubCell"/>
</dbReference>
<dbReference type="GO" id="GO:0008792">
    <property type="term" value="F:arginine decarboxylase activity"/>
    <property type="evidence" value="ECO:0007669"/>
    <property type="project" value="UniProtKB-EC"/>
</dbReference>
<dbReference type="GO" id="GO:0006527">
    <property type="term" value="P:arginine catabolic process"/>
    <property type="evidence" value="ECO:0007669"/>
    <property type="project" value="InterPro"/>
</dbReference>
<dbReference type="Gene3D" id="3.50.20.10">
    <property type="entry name" value="Pyruvoyl-Dependent Histidine Decarboxylase, subunit B"/>
    <property type="match status" value="1"/>
</dbReference>
<dbReference type="InterPro" id="IPR016104">
    <property type="entry name" value="Pyr-dep_his/arg-deCO2ase"/>
</dbReference>
<dbReference type="InterPro" id="IPR016105">
    <property type="entry name" value="Pyr-dep_his/arg-deCO2ase_sand"/>
</dbReference>
<dbReference type="InterPro" id="IPR002724">
    <property type="entry name" value="Pyruvoyl-dep_arg_deCO2ase"/>
</dbReference>
<dbReference type="PANTHER" id="PTHR40438">
    <property type="entry name" value="PYRUVOYL-DEPENDENT ARGININE DECARBOXYLASE"/>
    <property type="match status" value="1"/>
</dbReference>
<dbReference type="PANTHER" id="PTHR40438:SF1">
    <property type="entry name" value="PYRUVOYL-DEPENDENT ARGININE DECARBOXYLASE"/>
    <property type="match status" value="1"/>
</dbReference>
<dbReference type="Pfam" id="PF01862">
    <property type="entry name" value="PvlArgDC"/>
    <property type="match status" value="1"/>
</dbReference>
<dbReference type="SFLD" id="SFLDG01170">
    <property type="entry name" value="Pyruvoyl-dependent_arginine_de"/>
    <property type="match status" value="1"/>
</dbReference>
<dbReference type="SUPFAM" id="SSF56271">
    <property type="entry name" value="Pyruvoyl-dependent histidine and arginine decarboxylases"/>
    <property type="match status" value="1"/>
</dbReference>
<sequence length="195" mass="21707">MPYGTRYPTLAFHTGGVGESDDGMPPQPFETFCYDSALLQAKIENFNIVPYTSVLPKELFGNILPVDQCTKFFKHGAVLEVIMAGKGAAVAEGTQAIATGVGICWGKDKNGDLIGGWAAEYVEFFPTWIDDEIAESHAKMWLKKSLQHELDLRSVSKHSEFQYFHNYINIKKKFGFCLTALGFLNFENADPVVIQ</sequence>
<organism>
    <name type="scientific">Chlamydia muridarum (strain MoPn / Nigg)</name>
    <dbReference type="NCBI Taxonomy" id="243161"/>
    <lineage>
        <taxon>Bacteria</taxon>
        <taxon>Pseudomonadati</taxon>
        <taxon>Chlamydiota</taxon>
        <taxon>Chlamydiia</taxon>
        <taxon>Chlamydiales</taxon>
        <taxon>Chlamydiaceae</taxon>
        <taxon>Chlamydia/Chlamydophila group</taxon>
        <taxon>Chlamydia</taxon>
    </lineage>
</organism>
<protein>
    <recommendedName>
        <fullName>Pyruvoyl-dependent arginine decarboxylase AaxB</fullName>
        <shortName>PvlArgDC</shortName>
        <ecNumber>4.1.1.19</ecNumber>
    </recommendedName>
    <alternativeName>
        <fullName>Biodegradative arginine decarboxylase</fullName>
    </alternativeName>
    <component>
        <recommendedName>
            <fullName>Pyruvoyl-dependent arginine decarboxylase subunit beta</fullName>
        </recommendedName>
    </component>
    <component>
        <recommendedName>
            <fullName>Pyruvoyl-dependent arginine decarboxylase subunit alpha</fullName>
        </recommendedName>
    </component>
</protein>
<name>AAXB_CHLMU</name>
<accession>Q9PK21</accession>
<reference key="1">
    <citation type="journal article" date="2000" name="Nucleic Acids Res.">
        <title>Genome sequences of Chlamydia trachomatis MoPn and Chlamydia pneumoniae AR39.</title>
        <authorList>
            <person name="Read T.D."/>
            <person name="Brunham R.C."/>
            <person name="Shen C."/>
            <person name="Gill S.R."/>
            <person name="Heidelberg J.F."/>
            <person name="White O."/>
            <person name="Hickey E.K."/>
            <person name="Peterson J.D."/>
            <person name="Utterback T.R."/>
            <person name="Berry K.J."/>
            <person name="Bass S."/>
            <person name="Linher K.D."/>
            <person name="Weidman J.F."/>
            <person name="Khouri H.M."/>
            <person name="Craven B."/>
            <person name="Bowman C."/>
            <person name="Dodson R.J."/>
            <person name="Gwinn M.L."/>
            <person name="Nelson W.C."/>
            <person name="DeBoy R.T."/>
            <person name="Kolonay J.F."/>
            <person name="McClarty G."/>
            <person name="Salzberg S.L."/>
            <person name="Eisen J.A."/>
            <person name="Fraser C.M."/>
        </authorList>
    </citation>
    <scope>NUCLEOTIDE SEQUENCE [LARGE SCALE GENOMIC DNA]</scope>
    <source>
        <strain>MoPn / Nigg</strain>
    </source>
</reference>
<comment type="function">
    <text evidence="1">Part of the AaxABC system, catalyzes the decarboxylation of L-arginine. The arginine uptake by the bacterium in the macrophage may be a virulence factor against the host innate immune response (By similarity).</text>
</comment>
<comment type="catalytic activity">
    <reaction>
        <text>L-arginine + H(+) = agmatine + CO2</text>
        <dbReference type="Rhea" id="RHEA:17641"/>
        <dbReference type="ChEBI" id="CHEBI:15378"/>
        <dbReference type="ChEBI" id="CHEBI:16526"/>
        <dbReference type="ChEBI" id="CHEBI:32682"/>
        <dbReference type="ChEBI" id="CHEBI:58145"/>
        <dbReference type="EC" id="4.1.1.19"/>
    </reaction>
</comment>
<comment type="cofactor">
    <cofactor evidence="1">
        <name>pyruvate</name>
        <dbReference type="ChEBI" id="CHEBI:15361"/>
    </cofactor>
    <text evidence="1">Binds 1 pyruvoyl group covalently per subunit.</text>
</comment>
<comment type="subunit">
    <text evidence="1">Trimer of an alpha-beta dimer.</text>
</comment>
<comment type="subcellular location">
    <subcellularLocation>
        <location evidence="1">Cytoplasm</location>
    </subcellularLocation>
</comment>
<comment type="similarity">
    <text evidence="2">Belongs to the pyruvoyl-dependent arginine decarboxylase family.</text>
</comment>
<keyword id="KW-0963">Cytoplasm</keyword>
<keyword id="KW-0210">Decarboxylase</keyword>
<keyword id="KW-0456">Lyase</keyword>
<keyword id="KW-0670">Pyruvate</keyword>
<keyword id="KW-0843">Virulence</keyword>
<feature type="chain" id="PRO_0000364045" description="Pyruvoyl-dependent arginine decarboxylase subunit beta">
    <location>
        <begin position="1"/>
        <end position="52"/>
    </location>
</feature>
<feature type="chain" id="PRO_0000364046" description="Pyruvoyl-dependent arginine decarboxylase subunit alpha">
    <location>
        <begin position="53"/>
        <end position="195"/>
    </location>
</feature>
<feature type="site" description="Cleavage (non-hydrolytic)" evidence="1">
    <location>
        <begin position="52"/>
        <end position="53"/>
    </location>
</feature>
<feature type="modified residue" description="Pyruvic acid (Ser)" evidence="1">
    <location>
        <position position="53"/>
    </location>
</feature>
<evidence type="ECO:0000250" key="1"/>
<evidence type="ECO:0000305" key="2"/>